<evidence type="ECO:0000255" key="1">
    <source>
        <dbReference type="HAMAP-Rule" id="MF_00340"/>
    </source>
</evidence>
<evidence type="ECO:0000305" key="2"/>
<name>RL32_CLONN</name>
<gene>
    <name evidence="1" type="primary">rpmF</name>
    <name type="ordered locus">NT01CX_2222</name>
</gene>
<feature type="chain" id="PRO_0000296448" description="Large ribosomal subunit protein bL32">
    <location>
        <begin position="1"/>
        <end position="60"/>
    </location>
</feature>
<organism>
    <name type="scientific">Clostridium novyi (strain NT)</name>
    <dbReference type="NCBI Taxonomy" id="386415"/>
    <lineage>
        <taxon>Bacteria</taxon>
        <taxon>Bacillati</taxon>
        <taxon>Bacillota</taxon>
        <taxon>Clostridia</taxon>
        <taxon>Eubacteriales</taxon>
        <taxon>Clostridiaceae</taxon>
        <taxon>Clostridium</taxon>
    </lineage>
</organism>
<comment type="similarity">
    <text evidence="1">Belongs to the bacterial ribosomal protein bL32 family.</text>
</comment>
<reference key="1">
    <citation type="journal article" date="2006" name="Nat. Biotechnol.">
        <title>The genome and transcriptomes of the anti-tumor agent Clostridium novyi-NT.</title>
        <authorList>
            <person name="Bettegowda C."/>
            <person name="Huang X."/>
            <person name="Lin J."/>
            <person name="Cheong I."/>
            <person name="Kohli M."/>
            <person name="Szabo S.A."/>
            <person name="Zhang X."/>
            <person name="Diaz L.A. Jr."/>
            <person name="Velculescu V.E."/>
            <person name="Parmigiani G."/>
            <person name="Kinzler K.W."/>
            <person name="Vogelstein B."/>
            <person name="Zhou S."/>
        </authorList>
    </citation>
    <scope>NUCLEOTIDE SEQUENCE [LARGE SCALE GENOMIC DNA]</scope>
    <source>
        <strain>NT</strain>
    </source>
</reference>
<dbReference type="EMBL" id="CP000382">
    <property type="protein sequence ID" value="ABK61244.1"/>
    <property type="molecule type" value="Genomic_DNA"/>
</dbReference>
<dbReference type="RefSeq" id="WP_003368664.1">
    <property type="nucleotide sequence ID" value="NC_008593.1"/>
</dbReference>
<dbReference type="SMR" id="A0Q0Z3"/>
<dbReference type="STRING" id="386415.NT01CX_2222"/>
<dbReference type="KEGG" id="cno:NT01CX_2222"/>
<dbReference type="eggNOG" id="COG0333">
    <property type="taxonomic scope" value="Bacteria"/>
</dbReference>
<dbReference type="HOGENOM" id="CLU_129084_1_3_9"/>
<dbReference type="Proteomes" id="UP000008220">
    <property type="component" value="Chromosome"/>
</dbReference>
<dbReference type="GO" id="GO:0015934">
    <property type="term" value="C:large ribosomal subunit"/>
    <property type="evidence" value="ECO:0007669"/>
    <property type="project" value="InterPro"/>
</dbReference>
<dbReference type="GO" id="GO:0003735">
    <property type="term" value="F:structural constituent of ribosome"/>
    <property type="evidence" value="ECO:0007669"/>
    <property type="project" value="InterPro"/>
</dbReference>
<dbReference type="GO" id="GO:0006412">
    <property type="term" value="P:translation"/>
    <property type="evidence" value="ECO:0007669"/>
    <property type="project" value="UniProtKB-UniRule"/>
</dbReference>
<dbReference type="HAMAP" id="MF_00340">
    <property type="entry name" value="Ribosomal_bL32"/>
    <property type="match status" value="1"/>
</dbReference>
<dbReference type="InterPro" id="IPR002677">
    <property type="entry name" value="Ribosomal_bL32"/>
</dbReference>
<dbReference type="InterPro" id="IPR044957">
    <property type="entry name" value="Ribosomal_bL32_bact"/>
</dbReference>
<dbReference type="InterPro" id="IPR011332">
    <property type="entry name" value="Ribosomal_zn-bd"/>
</dbReference>
<dbReference type="NCBIfam" id="TIGR01031">
    <property type="entry name" value="rpmF_bact"/>
    <property type="match status" value="1"/>
</dbReference>
<dbReference type="PANTHER" id="PTHR35534">
    <property type="entry name" value="50S RIBOSOMAL PROTEIN L32"/>
    <property type="match status" value="1"/>
</dbReference>
<dbReference type="PANTHER" id="PTHR35534:SF2">
    <property type="entry name" value="LARGE RIBOSOMAL SUBUNIT PROTEIN BL32"/>
    <property type="match status" value="1"/>
</dbReference>
<dbReference type="Pfam" id="PF01783">
    <property type="entry name" value="Ribosomal_L32p"/>
    <property type="match status" value="1"/>
</dbReference>
<dbReference type="SUPFAM" id="SSF57829">
    <property type="entry name" value="Zn-binding ribosomal proteins"/>
    <property type="match status" value="1"/>
</dbReference>
<keyword id="KW-1185">Reference proteome</keyword>
<keyword id="KW-0687">Ribonucleoprotein</keyword>
<keyword id="KW-0689">Ribosomal protein</keyword>
<protein>
    <recommendedName>
        <fullName evidence="1">Large ribosomal subunit protein bL32</fullName>
    </recommendedName>
    <alternativeName>
        <fullName evidence="2">50S ribosomal protein L32</fullName>
    </alternativeName>
</protein>
<sequence>MAHPKRKMSKSKRDSRRAQTFKLSLPGIVECPQCHEMKLAHRVCKDCGYYDGKEIVSKEN</sequence>
<proteinExistence type="inferred from homology"/>
<accession>A0Q0Z3</accession>